<comment type="function">
    <text evidence="1">Catalyzes the attachment of glutamate to tRNA(Glu) in a two-step reaction: glutamate is first activated by ATP to form Glu-AMP and then transferred to the acceptor end of tRNA(Glu).</text>
</comment>
<comment type="catalytic activity">
    <reaction evidence="1">
        <text>tRNA(Glu) + L-glutamate + ATP = L-glutamyl-tRNA(Glu) + AMP + diphosphate</text>
        <dbReference type="Rhea" id="RHEA:23540"/>
        <dbReference type="Rhea" id="RHEA-COMP:9663"/>
        <dbReference type="Rhea" id="RHEA-COMP:9680"/>
        <dbReference type="ChEBI" id="CHEBI:29985"/>
        <dbReference type="ChEBI" id="CHEBI:30616"/>
        <dbReference type="ChEBI" id="CHEBI:33019"/>
        <dbReference type="ChEBI" id="CHEBI:78442"/>
        <dbReference type="ChEBI" id="CHEBI:78520"/>
        <dbReference type="ChEBI" id="CHEBI:456215"/>
        <dbReference type="EC" id="6.1.1.17"/>
    </reaction>
</comment>
<comment type="subcellular location">
    <subcellularLocation>
        <location evidence="1">Cytoplasm</location>
    </subcellularLocation>
</comment>
<comment type="similarity">
    <text evidence="1">Belongs to the class-I aminoacyl-tRNA synthetase family. Glutamate--tRNA ligase type 2 subfamily.</text>
</comment>
<feature type="chain" id="PRO_0000119718" description="Glutamate--tRNA ligase">
    <location>
        <begin position="1"/>
        <end position="571"/>
    </location>
</feature>
<feature type="region of interest" description="Disordered" evidence="2">
    <location>
        <begin position="75"/>
        <end position="98"/>
    </location>
</feature>
<feature type="short sequence motif" description="'HIGH' region" evidence="1">
    <location>
        <begin position="105"/>
        <end position="115"/>
    </location>
</feature>
<feature type="compositionally biased region" description="Basic and acidic residues" evidence="2">
    <location>
        <begin position="75"/>
        <end position="88"/>
    </location>
</feature>
<keyword id="KW-0030">Aminoacyl-tRNA synthetase</keyword>
<keyword id="KW-0067">ATP-binding</keyword>
<keyword id="KW-0963">Cytoplasm</keyword>
<keyword id="KW-0436">Ligase</keyword>
<keyword id="KW-0547">Nucleotide-binding</keyword>
<keyword id="KW-0648">Protein biosynthesis</keyword>
<keyword id="KW-1185">Reference proteome</keyword>
<name>SYE_METKA</name>
<accession>Q8TXB7</accession>
<gene>
    <name evidence="1" type="primary">gltX</name>
    <name type="ordered locus">MK0757</name>
</gene>
<protein>
    <recommendedName>
        <fullName evidence="1">Glutamate--tRNA ligase</fullName>
        <ecNumber evidence="1">6.1.1.17</ecNumber>
    </recommendedName>
    <alternativeName>
        <fullName evidence="1">Glutamyl-tRNA synthetase</fullName>
        <shortName evidence="1">GluRS</shortName>
    </alternativeName>
</protein>
<organism>
    <name type="scientific">Methanopyrus kandleri (strain AV19 / DSM 6324 / JCM 9639 / NBRC 100938)</name>
    <dbReference type="NCBI Taxonomy" id="190192"/>
    <lineage>
        <taxon>Archaea</taxon>
        <taxon>Methanobacteriati</taxon>
        <taxon>Methanobacteriota</taxon>
        <taxon>Methanomada group</taxon>
        <taxon>Methanopyri</taxon>
        <taxon>Methanopyrales</taxon>
        <taxon>Methanopyraceae</taxon>
        <taxon>Methanopyrus</taxon>
    </lineage>
</organism>
<evidence type="ECO:0000255" key="1">
    <source>
        <dbReference type="HAMAP-Rule" id="MF_02076"/>
    </source>
</evidence>
<evidence type="ECO:0000256" key="2">
    <source>
        <dbReference type="SAM" id="MobiDB-lite"/>
    </source>
</evidence>
<dbReference type="EC" id="6.1.1.17" evidence="1"/>
<dbReference type="EMBL" id="AE009439">
    <property type="protein sequence ID" value="AAM01971.1"/>
    <property type="molecule type" value="Genomic_DNA"/>
</dbReference>
<dbReference type="RefSeq" id="WP_011019126.1">
    <property type="nucleotide sequence ID" value="NC_003551.1"/>
</dbReference>
<dbReference type="SMR" id="Q8TXB7"/>
<dbReference type="FunCoup" id="Q8TXB7">
    <property type="interactions" value="292"/>
</dbReference>
<dbReference type="STRING" id="190192.MK0757"/>
<dbReference type="PaxDb" id="190192-MK0757"/>
<dbReference type="EnsemblBacteria" id="AAM01971">
    <property type="protein sequence ID" value="AAM01971"/>
    <property type="gene ID" value="MK0757"/>
</dbReference>
<dbReference type="GeneID" id="1476858"/>
<dbReference type="KEGG" id="mka:MK0757"/>
<dbReference type="PATRIC" id="fig|190192.8.peg.797"/>
<dbReference type="HOGENOM" id="CLU_001882_1_3_2"/>
<dbReference type="InParanoid" id="Q8TXB7"/>
<dbReference type="OrthoDB" id="10470at2157"/>
<dbReference type="Proteomes" id="UP000001826">
    <property type="component" value="Chromosome"/>
</dbReference>
<dbReference type="GO" id="GO:0005829">
    <property type="term" value="C:cytosol"/>
    <property type="evidence" value="ECO:0007669"/>
    <property type="project" value="TreeGrafter"/>
</dbReference>
<dbReference type="GO" id="GO:0032991">
    <property type="term" value="C:protein-containing complex"/>
    <property type="evidence" value="ECO:0007669"/>
    <property type="project" value="UniProtKB-ARBA"/>
</dbReference>
<dbReference type="GO" id="GO:0005524">
    <property type="term" value="F:ATP binding"/>
    <property type="evidence" value="ECO:0007669"/>
    <property type="project" value="UniProtKB-UniRule"/>
</dbReference>
<dbReference type="GO" id="GO:0004818">
    <property type="term" value="F:glutamate-tRNA ligase activity"/>
    <property type="evidence" value="ECO:0007669"/>
    <property type="project" value="UniProtKB-UniRule"/>
</dbReference>
<dbReference type="GO" id="GO:0043604">
    <property type="term" value="P:amide biosynthetic process"/>
    <property type="evidence" value="ECO:0007669"/>
    <property type="project" value="TreeGrafter"/>
</dbReference>
<dbReference type="GO" id="GO:0006424">
    <property type="term" value="P:glutamyl-tRNA aminoacylation"/>
    <property type="evidence" value="ECO:0007669"/>
    <property type="project" value="UniProtKB-UniRule"/>
</dbReference>
<dbReference type="CDD" id="cd09287">
    <property type="entry name" value="GluRS_non_core"/>
    <property type="match status" value="1"/>
</dbReference>
<dbReference type="Gene3D" id="2.40.240.100">
    <property type="match status" value="1"/>
</dbReference>
<dbReference type="Gene3D" id="3.40.50.620">
    <property type="entry name" value="HUPs"/>
    <property type="match status" value="1"/>
</dbReference>
<dbReference type="Gene3D" id="2.40.240.10">
    <property type="entry name" value="Ribosomal Protein L25, Chain P"/>
    <property type="match status" value="1"/>
</dbReference>
<dbReference type="HAMAP" id="MF_02076">
    <property type="entry name" value="Glu_tRNA_synth_type2"/>
    <property type="match status" value="1"/>
</dbReference>
<dbReference type="InterPro" id="IPR001412">
    <property type="entry name" value="aa-tRNA-synth_I_CS"/>
</dbReference>
<dbReference type="InterPro" id="IPR050132">
    <property type="entry name" value="Gln/Glu-tRNA_Ligase"/>
</dbReference>
<dbReference type="InterPro" id="IPR004526">
    <property type="entry name" value="Glu-tRNA-synth_arc/euk"/>
</dbReference>
<dbReference type="InterPro" id="IPR000924">
    <property type="entry name" value="Glu/Gln-tRNA-synth"/>
</dbReference>
<dbReference type="InterPro" id="IPR020058">
    <property type="entry name" value="Glu/Gln-tRNA-synth_Ib_cat-dom"/>
</dbReference>
<dbReference type="InterPro" id="IPR020059">
    <property type="entry name" value="Glu/Gln-tRNA-synth_Ib_codon-bd"/>
</dbReference>
<dbReference type="InterPro" id="IPR020056">
    <property type="entry name" value="Rbsml_bL25/Gln-tRNA_synth_N"/>
</dbReference>
<dbReference type="InterPro" id="IPR011035">
    <property type="entry name" value="Ribosomal_bL25/Gln-tRNA_synth"/>
</dbReference>
<dbReference type="InterPro" id="IPR014729">
    <property type="entry name" value="Rossmann-like_a/b/a_fold"/>
</dbReference>
<dbReference type="InterPro" id="IPR049437">
    <property type="entry name" value="tRNA-synt_1c_C2"/>
</dbReference>
<dbReference type="NCBIfam" id="TIGR00463">
    <property type="entry name" value="gltX_arch"/>
    <property type="match status" value="1"/>
</dbReference>
<dbReference type="NCBIfam" id="NF003169">
    <property type="entry name" value="PRK04156.1"/>
    <property type="match status" value="1"/>
</dbReference>
<dbReference type="PANTHER" id="PTHR43097:SF5">
    <property type="entry name" value="GLUTAMATE--TRNA LIGASE"/>
    <property type="match status" value="1"/>
</dbReference>
<dbReference type="PANTHER" id="PTHR43097">
    <property type="entry name" value="GLUTAMINE-TRNA LIGASE"/>
    <property type="match status" value="1"/>
</dbReference>
<dbReference type="Pfam" id="PF00749">
    <property type="entry name" value="tRNA-synt_1c"/>
    <property type="match status" value="1"/>
</dbReference>
<dbReference type="Pfam" id="PF03950">
    <property type="entry name" value="tRNA-synt_1c_C"/>
    <property type="match status" value="1"/>
</dbReference>
<dbReference type="Pfam" id="PF20974">
    <property type="entry name" value="tRNA-synt_1c_C2"/>
    <property type="match status" value="1"/>
</dbReference>
<dbReference type="PRINTS" id="PR00987">
    <property type="entry name" value="TRNASYNTHGLU"/>
</dbReference>
<dbReference type="SUPFAM" id="SSF52374">
    <property type="entry name" value="Nucleotidylyl transferase"/>
    <property type="match status" value="1"/>
</dbReference>
<dbReference type="SUPFAM" id="SSF50715">
    <property type="entry name" value="Ribosomal protein L25-like"/>
    <property type="match status" value="1"/>
</dbReference>
<dbReference type="PROSITE" id="PS00178">
    <property type="entry name" value="AA_TRNA_LIGASE_I"/>
    <property type="match status" value="1"/>
</dbReference>
<proteinExistence type="inferred from homology"/>
<sequence>MEEKELRDLVRRYALENAARYGGRANPNAVMKKIMKEHEELRPRAKEVLKTVREVVREVNKMSGEEIRRELEELGGPREDVARDKEGLKPLPGAEPGNVRLRFAPNPSGPLHIGHARAAVLNDEYARRYDGTLVLRIEDTDPRRVDPEAYDMIEEDLEWLGVNIDERYVQSNRIELYYMVCEELLEREGAYVCTCDPDEFRRLRDVGRACPCRSRDKEENLELWEEMLDGTFSEGEAVVRVKTEVDHPDPAVREWIAFRIVEEEHPMTGSRYLVWPTMNFAVAVDDHLMNITHVLRGKDHESNTRRQKYVFEHLGWDTPEYVHYGILKVEGAVLSTSEIRRGIDSGEYTGWDDVRVATLRALRRRGIKPEAIRETILEIGLTDVDATFSWEHLYARNRKMIDPESHRYFFVRDPVELRIEGMKESVLARLPLHPDRDEGERVLILHPENGVARALLDGEDAEDLWEGDVVRLMNAVNVEIEEVGDGWLRGRYHSDDYRIAKEEGAQIVHWVPPDQAVRCEVVRPDGSVESGYAEINVEREQAGSTVQFERLYFVRLEEVSSGGVRAVYAHD</sequence>
<reference key="1">
    <citation type="journal article" date="2002" name="Proc. Natl. Acad. Sci. U.S.A.">
        <title>The complete genome of hyperthermophile Methanopyrus kandleri AV19 and monophyly of archaeal methanogens.</title>
        <authorList>
            <person name="Slesarev A.I."/>
            <person name="Mezhevaya K.V."/>
            <person name="Makarova K.S."/>
            <person name="Polushin N.N."/>
            <person name="Shcherbinina O.V."/>
            <person name="Shakhova V.V."/>
            <person name="Belova G.I."/>
            <person name="Aravind L."/>
            <person name="Natale D.A."/>
            <person name="Rogozin I.B."/>
            <person name="Tatusov R.L."/>
            <person name="Wolf Y.I."/>
            <person name="Stetter K.O."/>
            <person name="Malykh A.G."/>
            <person name="Koonin E.V."/>
            <person name="Kozyavkin S.A."/>
        </authorList>
    </citation>
    <scope>NUCLEOTIDE SEQUENCE [LARGE SCALE GENOMIC DNA]</scope>
    <source>
        <strain>AV19 / DSM 6324 / JCM 9639 / NBRC 100938</strain>
    </source>
</reference>